<evidence type="ECO:0000250" key="1"/>
<evidence type="ECO:0000255" key="2"/>
<evidence type="ECO:0000255" key="3">
    <source>
        <dbReference type="PROSITE-ProRule" id="PRU00175"/>
    </source>
</evidence>
<evidence type="ECO:0000305" key="4"/>
<comment type="function">
    <text evidence="1">Involved in the trafficking of vacuolar proteins. May function as a sorting receptor for protein trafficking to the protein storage vacuole (PSV) (By similarity).</text>
</comment>
<comment type="subcellular location">
    <subcellularLocation>
        <location evidence="1">Prevacuolar compartment membrane</location>
    </subcellularLocation>
    <subcellularLocation>
        <location evidence="1">Protein storage vacuole membrane</location>
        <topology evidence="4">Single-pass type I membrane protein</topology>
    </subcellularLocation>
</comment>
<comment type="sequence caution" evidence="4">
    <conflict type="erroneous gene model prediction">
        <sequence resource="EMBL-CDS" id="AAF79351"/>
    </conflict>
</comment>
<comment type="sequence caution" evidence="4">
    <conflict type="miscellaneous discrepancy">
        <sequence resource="EMBL" id="BX818705"/>
    </conflict>
    <text>Sequencing errors.</text>
</comment>
<feature type="signal peptide" evidence="2">
    <location>
        <begin position="1"/>
        <end position="20"/>
    </location>
</feature>
<feature type="chain" id="PRO_0000425119" description="Receptor homology region, transmembrane domain- and RING domain-containing protein 5">
    <location>
        <begin position="21"/>
        <end position="318"/>
    </location>
</feature>
<feature type="topological domain" description="Lumenal" evidence="2">
    <location>
        <begin position="22"/>
        <end position="163"/>
    </location>
</feature>
<feature type="transmembrane region" description="Helical" evidence="2">
    <location>
        <begin position="164"/>
        <end position="184"/>
    </location>
</feature>
<feature type="topological domain" description="Cytoplasmic" evidence="2">
    <location>
        <begin position="185"/>
        <end position="318"/>
    </location>
</feature>
<feature type="domain" description="PA">
    <location>
        <begin position="70"/>
        <end position="143"/>
    </location>
</feature>
<feature type="zinc finger region" description="RING-type; atypical" evidence="3">
    <location>
        <begin position="233"/>
        <end position="275"/>
    </location>
</feature>
<feature type="glycosylation site" description="N-linked (GlcNAc...) asparagine" evidence="2">
    <location>
        <position position="121"/>
    </location>
</feature>
<feature type="disulfide bond" evidence="2">
    <location>
        <begin position="62"/>
        <end position="87"/>
    </location>
</feature>
<name>RMR5_ARATH</name>
<protein>
    <recommendedName>
        <fullName>Receptor homology region, transmembrane domain- and RING domain-containing protein 5</fullName>
        <shortName>AtRMR5</shortName>
    </recommendedName>
</protein>
<organism>
    <name type="scientific">Arabidopsis thaliana</name>
    <name type="common">Mouse-ear cress</name>
    <dbReference type="NCBI Taxonomy" id="3702"/>
    <lineage>
        <taxon>Eukaryota</taxon>
        <taxon>Viridiplantae</taxon>
        <taxon>Streptophyta</taxon>
        <taxon>Embryophyta</taxon>
        <taxon>Tracheophyta</taxon>
        <taxon>Spermatophyta</taxon>
        <taxon>Magnoliopsida</taxon>
        <taxon>eudicotyledons</taxon>
        <taxon>Gunneridae</taxon>
        <taxon>Pentapetalae</taxon>
        <taxon>rosids</taxon>
        <taxon>malvids</taxon>
        <taxon>Brassicales</taxon>
        <taxon>Brassicaceae</taxon>
        <taxon>Camelineae</taxon>
        <taxon>Arabidopsis</taxon>
    </lineage>
</organism>
<keyword id="KW-1015">Disulfide bond</keyword>
<keyword id="KW-0325">Glycoprotein</keyword>
<keyword id="KW-0472">Membrane</keyword>
<keyword id="KW-0479">Metal-binding</keyword>
<keyword id="KW-0653">Protein transport</keyword>
<keyword id="KW-1185">Reference proteome</keyword>
<keyword id="KW-0732">Signal</keyword>
<keyword id="KW-0812">Transmembrane</keyword>
<keyword id="KW-1133">Transmembrane helix</keyword>
<keyword id="KW-0813">Transport</keyword>
<keyword id="KW-0926">Vacuole</keyword>
<keyword id="KW-0862">Zinc</keyword>
<keyword id="KW-0863">Zinc-finger</keyword>
<dbReference type="EMBL" id="AC007887">
    <property type="protein sequence ID" value="AAF79351.1"/>
    <property type="status" value="ALT_SEQ"/>
    <property type="molecule type" value="Genomic_DNA"/>
</dbReference>
<dbReference type="EMBL" id="CP002684">
    <property type="protein sequence ID" value="AEE31820.1"/>
    <property type="molecule type" value="Genomic_DNA"/>
</dbReference>
<dbReference type="EMBL" id="BX818705">
    <property type="status" value="NOT_ANNOTATED_CDS"/>
    <property type="molecule type" value="mRNA"/>
</dbReference>
<dbReference type="PIR" id="H86477">
    <property type="entry name" value="H86477"/>
</dbReference>
<dbReference type="RefSeq" id="NP_174800.2">
    <property type="nucleotide sequence ID" value="NM_103264.3"/>
</dbReference>
<dbReference type="SMR" id="F4HZZ5"/>
<dbReference type="FunCoup" id="F4HZZ5">
    <property type="interactions" value="2453"/>
</dbReference>
<dbReference type="STRING" id="3702.F4HZZ5"/>
<dbReference type="GlyCosmos" id="F4HZZ5">
    <property type="glycosylation" value="1 site, No reported glycans"/>
</dbReference>
<dbReference type="GlyGen" id="F4HZZ5">
    <property type="glycosylation" value="1 site"/>
</dbReference>
<dbReference type="PaxDb" id="3702-AT1G35630.1"/>
<dbReference type="EnsemblPlants" id="AT1G35630.1">
    <property type="protein sequence ID" value="AT1G35630.1"/>
    <property type="gene ID" value="AT1G35630"/>
</dbReference>
<dbReference type="GeneID" id="840463"/>
<dbReference type="Gramene" id="AT1G35630.1">
    <property type="protein sequence ID" value="AT1G35630.1"/>
    <property type="gene ID" value="AT1G35630"/>
</dbReference>
<dbReference type="KEGG" id="ath:AT1G35630"/>
<dbReference type="Araport" id="AT1G35630"/>
<dbReference type="TAIR" id="AT1G35630">
    <property type="gene designation" value="RMR5"/>
</dbReference>
<dbReference type="eggNOG" id="KOG4628">
    <property type="taxonomic scope" value="Eukaryota"/>
</dbReference>
<dbReference type="HOGENOM" id="CLU_035275_0_0_1"/>
<dbReference type="InParanoid" id="F4HZZ5"/>
<dbReference type="OMA" id="PCSDWIA"/>
<dbReference type="PRO" id="PR:F4HZZ5"/>
<dbReference type="Proteomes" id="UP000006548">
    <property type="component" value="Chromosome 1"/>
</dbReference>
<dbReference type="ExpressionAtlas" id="F4HZZ5">
    <property type="expression patterns" value="baseline and differential"/>
</dbReference>
<dbReference type="GO" id="GO:0012505">
    <property type="term" value="C:endomembrane system"/>
    <property type="evidence" value="ECO:0007669"/>
    <property type="project" value="UniProtKB-ARBA"/>
</dbReference>
<dbReference type="GO" id="GO:0032586">
    <property type="term" value="C:protein storage vacuole membrane"/>
    <property type="evidence" value="ECO:0007669"/>
    <property type="project" value="UniProtKB-SubCell"/>
</dbReference>
<dbReference type="GO" id="GO:0008270">
    <property type="term" value="F:zinc ion binding"/>
    <property type="evidence" value="ECO:0007669"/>
    <property type="project" value="UniProtKB-KW"/>
</dbReference>
<dbReference type="GO" id="GO:0015031">
    <property type="term" value="P:protein transport"/>
    <property type="evidence" value="ECO:0007669"/>
    <property type="project" value="UniProtKB-KW"/>
</dbReference>
<dbReference type="CDD" id="cd02123">
    <property type="entry name" value="PA_C_RZF_like"/>
    <property type="match status" value="1"/>
</dbReference>
<dbReference type="CDD" id="cd16468">
    <property type="entry name" value="RING-H2_RNF11"/>
    <property type="match status" value="1"/>
</dbReference>
<dbReference type="FunFam" id="3.50.30.30:FF:000020">
    <property type="entry name" value="Receptor homology region transmembrane domain-and RING domain-containing protein 2"/>
    <property type="match status" value="1"/>
</dbReference>
<dbReference type="FunFam" id="3.30.40.10:FF:001050">
    <property type="entry name" value="Receptor homology region, transmembrane domain- and RING domain-containing protein 1"/>
    <property type="match status" value="1"/>
</dbReference>
<dbReference type="Gene3D" id="3.50.30.30">
    <property type="match status" value="1"/>
</dbReference>
<dbReference type="Gene3D" id="3.30.40.10">
    <property type="entry name" value="Zinc/RING finger domain, C3HC4 (zinc finger)"/>
    <property type="match status" value="1"/>
</dbReference>
<dbReference type="InterPro" id="IPR051653">
    <property type="entry name" value="E3_ligase_sorting_rcpt"/>
</dbReference>
<dbReference type="InterPro" id="IPR046450">
    <property type="entry name" value="PA_dom_sf"/>
</dbReference>
<dbReference type="InterPro" id="IPR003137">
    <property type="entry name" value="PA_domain"/>
</dbReference>
<dbReference type="InterPro" id="IPR042981">
    <property type="entry name" value="RNF11_RING-H2"/>
</dbReference>
<dbReference type="InterPro" id="IPR001841">
    <property type="entry name" value="Znf_RING"/>
</dbReference>
<dbReference type="InterPro" id="IPR013083">
    <property type="entry name" value="Znf_RING/FYVE/PHD"/>
</dbReference>
<dbReference type="InterPro" id="IPR044744">
    <property type="entry name" value="ZNRF4/RNF13/RNF167_PA"/>
</dbReference>
<dbReference type="PANTHER" id="PTHR47168">
    <property type="entry name" value="RING ZINC FINGER DOMAIN SUPERFAMILY PROTEIN-RELATED"/>
    <property type="match status" value="1"/>
</dbReference>
<dbReference type="PANTHER" id="PTHR47168:SF5">
    <property type="entry name" value="RING-TYPE DOMAIN-CONTAINING PROTEIN"/>
    <property type="match status" value="1"/>
</dbReference>
<dbReference type="Pfam" id="PF02225">
    <property type="entry name" value="PA"/>
    <property type="match status" value="1"/>
</dbReference>
<dbReference type="Pfam" id="PF13639">
    <property type="entry name" value="zf-RING_2"/>
    <property type="match status" value="1"/>
</dbReference>
<dbReference type="SMART" id="SM00184">
    <property type="entry name" value="RING"/>
    <property type="match status" value="1"/>
</dbReference>
<dbReference type="SUPFAM" id="SSF52025">
    <property type="entry name" value="PA domain"/>
    <property type="match status" value="1"/>
</dbReference>
<dbReference type="SUPFAM" id="SSF57850">
    <property type="entry name" value="RING/U-box"/>
    <property type="match status" value="1"/>
</dbReference>
<dbReference type="PROSITE" id="PS50089">
    <property type="entry name" value="ZF_RING_2"/>
    <property type="match status" value="1"/>
</dbReference>
<gene>
    <name type="primary">RMR5</name>
    <name type="ordered locus">At1g35630</name>
    <name type="ORF">F15O4.19</name>
</gene>
<sequence>MNYSWITIMSLLVICKLASAKVVLIGKNTILSFDDVEATFTPIVRNSGECGILYVAEPLEACSDITNMAEKRSKYRSSYVLIVLGGCSFEEKVRKAQKAGYKAAIVYNDGYDELLVPMAGNSSGVDIHGLLVTRASGEVLKGYADQDEMKLWLIPGFGISSWSIMGITFISLLAMSAILATCFVVRRHQIRQSVRDLPHGGQGLSCMPRDLLQSMPTEVYSGVLEESSTSVTCAICIDDYCVGEKLRILPCKHKYHAVCIDSWLGRCRSFCPVCKQNPRTGNDVPPASETTPLISPSPNSITSLQSFYDLPIVVRVYL</sequence>
<accession>F4HZZ5</accession>
<accession>Q9LQG6</accession>
<proteinExistence type="evidence at transcript level"/>
<reference key="1">
    <citation type="journal article" date="2000" name="Nature">
        <title>Sequence and analysis of chromosome 1 of the plant Arabidopsis thaliana.</title>
        <authorList>
            <person name="Theologis A."/>
            <person name="Ecker J.R."/>
            <person name="Palm C.J."/>
            <person name="Federspiel N.A."/>
            <person name="Kaul S."/>
            <person name="White O."/>
            <person name="Alonso J."/>
            <person name="Altafi H."/>
            <person name="Araujo R."/>
            <person name="Bowman C.L."/>
            <person name="Brooks S.Y."/>
            <person name="Buehler E."/>
            <person name="Chan A."/>
            <person name="Chao Q."/>
            <person name="Chen H."/>
            <person name="Cheuk R.F."/>
            <person name="Chin C.W."/>
            <person name="Chung M.K."/>
            <person name="Conn L."/>
            <person name="Conway A.B."/>
            <person name="Conway A.R."/>
            <person name="Creasy T.H."/>
            <person name="Dewar K."/>
            <person name="Dunn P."/>
            <person name="Etgu P."/>
            <person name="Feldblyum T.V."/>
            <person name="Feng J.-D."/>
            <person name="Fong B."/>
            <person name="Fujii C.Y."/>
            <person name="Gill J.E."/>
            <person name="Goldsmith A.D."/>
            <person name="Haas B."/>
            <person name="Hansen N.F."/>
            <person name="Hughes B."/>
            <person name="Huizar L."/>
            <person name="Hunter J.L."/>
            <person name="Jenkins J."/>
            <person name="Johnson-Hopson C."/>
            <person name="Khan S."/>
            <person name="Khaykin E."/>
            <person name="Kim C.J."/>
            <person name="Koo H.L."/>
            <person name="Kremenetskaia I."/>
            <person name="Kurtz D.B."/>
            <person name="Kwan A."/>
            <person name="Lam B."/>
            <person name="Langin-Hooper S."/>
            <person name="Lee A."/>
            <person name="Lee J.M."/>
            <person name="Lenz C.A."/>
            <person name="Li J.H."/>
            <person name="Li Y.-P."/>
            <person name="Lin X."/>
            <person name="Liu S.X."/>
            <person name="Liu Z.A."/>
            <person name="Luros J.S."/>
            <person name="Maiti R."/>
            <person name="Marziali A."/>
            <person name="Militscher J."/>
            <person name="Miranda M."/>
            <person name="Nguyen M."/>
            <person name="Nierman W.C."/>
            <person name="Osborne B.I."/>
            <person name="Pai G."/>
            <person name="Peterson J."/>
            <person name="Pham P.K."/>
            <person name="Rizzo M."/>
            <person name="Rooney T."/>
            <person name="Rowley D."/>
            <person name="Sakano H."/>
            <person name="Salzberg S.L."/>
            <person name="Schwartz J.R."/>
            <person name="Shinn P."/>
            <person name="Southwick A.M."/>
            <person name="Sun H."/>
            <person name="Tallon L.J."/>
            <person name="Tambunga G."/>
            <person name="Toriumi M.J."/>
            <person name="Town C.D."/>
            <person name="Utterback T."/>
            <person name="Van Aken S."/>
            <person name="Vaysberg M."/>
            <person name="Vysotskaia V.S."/>
            <person name="Walker M."/>
            <person name="Wu D."/>
            <person name="Yu G."/>
            <person name="Fraser C.M."/>
            <person name="Venter J.C."/>
            <person name="Davis R.W."/>
        </authorList>
    </citation>
    <scope>NUCLEOTIDE SEQUENCE [LARGE SCALE GENOMIC DNA]</scope>
    <source>
        <strain>cv. Columbia</strain>
    </source>
</reference>
<reference key="2">
    <citation type="journal article" date="2017" name="Plant J.">
        <title>Araport11: a complete reannotation of the Arabidopsis thaliana reference genome.</title>
        <authorList>
            <person name="Cheng C.Y."/>
            <person name="Krishnakumar V."/>
            <person name="Chan A.P."/>
            <person name="Thibaud-Nissen F."/>
            <person name="Schobel S."/>
            <person name="Town C.D."/>
        </authorList>
    </citation>
    <scope>GENOME REANNOTATION</scope>
    <source>
        <strain>cv. Columbia</strain>
    </source>
</reference>
<reference key="3">
    <citation type="journal article" date="2004" name="Genome Res.">
        <title>Whole genome sequence comparisons and 'full-length' cDNA sequences: a combined approach to evaluate and improve Arabidopsis genome annotation.</title>
        <authorList>
            <person name="Castelli V."/>
            <person name="Aury J.-M."/>
            <person name="Jaillon O."/>
            <person name="Wincker P."/>
            <person name="Clepet C."/>
            <person name="Menard M."/>
            <person name="Cruaud C."/>
            <person name="Quetier F."/>
            <person name="Scarpelli C."/>
            <person name="Schaechter V."/>
            <person name="Temple G."/>
            <person name="Caboche M."/>
            <person name="Weissenbach J."/>
            <person name="Salanoubat M."/>
        </authorList>
    </citation>
    <scope>NUCLEOTIDE SEQUENCE [LARGE SCALE MRNA]</scope>
    <source>
        <strain>cv. Columbia</strain>
    </source>
</reference>